<proteinExistence type="inferred from homology"/>
<evidence type="ECO:0000255" key="1">
    <source>
        <dbReference type="HAMAP-Rule" id="MF_04128"/>
    </source>
</evidence>
<keyword id="KW-0342">GTP-binding</keyword>
<keyword id="KW-0945">Host-virus interaction</keyword>
<keyword id="KW-0378">Hydrolase</keyword>
<keyword id="KW-1090">Inhibition of host innate immune response by virus</keyword>
<keyword id="KW-0489">Methyltransferase</keyword>
<keyword id="KW-0506">mRNA capping</keyword>
<keyword id="KW-0507">mRNA processing</keyword>
<keyword id="KW-0511">Multifunctional enzyme</keyword>
<keyword id="KW-0547">Nucleotide-binding</keyword>
<keyword id="KW-0548">Nucleotidyltransferase</keyword>
<keyword id="KW-0694">RNA-binding</keyword>
<keyword id="KW-0949">S-adenosyl-L-methionine</keyword>
<keyword id="KW-0808">Transferase</keyword>
<keyword id="KW-0899">Viral immunoevasion</keyword>
<keyword id="KW-0946">Virion</keyword>
<name>VP3_ROTBN</name>
<organismHost>
    <name type="scientific">Bos taurus</name>
    <name type="common">Bovine</name>
    <dbReference type="NCBI Taxonomy" id="9913"/>
</organismHost>
<feature type="chain" id="PRO_0000368075" description="Protein VP3">
    <location>
        <begin position="1"/>
        <end position="835"/>
    </location>
</feature>
<feature type="region of interest" description="N7-methyltransferase activity" evidence="1">
    <location>
        <begin position="171"/>
        <end position="245"/>
    </location>
</feature>
<feature type="region of interest" description="2'-O-methyltransferase activity" evidence="1">
    <location>
        <begin position="246"/>
        <end position="428"/>
    </location>
</feature>
<feature type="region of interest" description="N7-methyltransferase activity" evidence="1">
    <location>
        <begin position="429"/>
        <end position="555"/>
    </location>
</feature>
<feature type="region of interest" description="GTase/RTPase activity" evidence="1">
    <location>
        <begin position="556"/>
        <end position="692"/>
    </location>
</feature>
<feature type="region of interest" description="2'-5'-phosphodiesterase activity" evidence="1">
    <location>
        <begin position="693"/>
        <end position="835"/>
    </location>
</feature>
<feature type="active site" description="For 2'-5'-phosphodiesterase activity" evidence="1">
    <location>
        <position position="718"/>
    </location>
</feature>
<feature type="active site" description="For 2'-5'-phosphodiesterase activity" evidence="1">
    <location>
        <position position="720"/>
    </location>
</feature>
<feature type="active site" description="For 2'-5'-phosphodiesterase activity" evidence="1">
    <location>
        <position position="797"/>
    </location>
</feature>
<feature type="active site" description="For 2'-5'-phosphodiesterase activity" evidence="1">
    <location>
        <position position="799"/>
    </location>
</feature>
<organism>
    <name type="scientific">Rotavirus A (strain RVA/Cow/United States/NCDV-Lincoln/1969/G6P6[1])</name>
    <name type="common">RV-A</name>
    <name type="synonym">Rotavirus A (strain Nebraska calf diarrhea virus)</name>
    <dbReference type="NCBI Taxonomy" id="36439"/>
    <lineage>
        <taxon>Viruses</taxon>
        <taxon>Riboviria</taxon>
        <taxon>Orthornavirae</taxon>
        <taxon>Duplornaviricota</taxon>
        <taxon>Resentoviricetes</taxon>
        <taxon>Reovirales</taxon>
        <taxon>Sedoreoviridae</taxon>
        <taxon>Rotavirus</taxon>
        <taxon>Rotavirus A</taxon>
    </lineage>
</organism>
<dbReference type="EC" id="3.1.4.-" evidence="1"/>
<dbReference type="EC" id="2.7.7.50" evidence="1"/>
<dbReference type="EC" id="2.1.1.56" evidence="1"/>
<dbReference type="EMBL" id="DQ870495">
    <property type="protein sequence ID" value="ABI60862.1"/>
    <property type="molecule type" value="Genomic_RNA"/>
</dbReference>
<dbReference type="SMR" id="A7J3A0"/>
<dbReference type="GO" id="GO:0019013">
    <property type="term" value="C:viral nucleocapsid"/>
    <property type="evidence" value="ECO:0007669"/>
    <property type="project" value="UniProtKB-UniRule"/>
</dbReference>
<dbReference type="GO" id="GO:0005525">
    <property type="term" value="F:GTP binding"/>
    <property type="evidence" value="ECO:0007669"/>
    <property type="project" value="UniProtKB-UniRule"/>
</dbReference>
<dbReference type="GO" id="GO:0016787">
    <property type="term" value="F:hydrolase activity"/>
    <property type="evidence" value="ECO:0007669"/>
    <property type="project" value="UniProtKB-KW"/>
</dbReference>
<dbReference type="GO" id="GO:0004482">
    <property type="term" value="F:mRNA 5'-cap (guanine-N7-)-methyltransferase activity"/>
    <property type="evidence" value="ECO:0007669"/>
    <property type="project" value="UniProtKB-UniRule"/>
</dbReference>
<dbReference type="GO" id="GO:0004484">
    <property type="term" value="F:mRNA guanylyltransferase activity"/>
    <property type="evidence" value="ECO:0007669"/>
    <property type="project" value="UniProtKB-UniRule"/>
</dbReference>
<dbReference type="GO" id="GO:0003723">
    <property type="term" value="F:RNA binding"/>
    <property type="evidence" value="ECO:0007669"/>
    <property type="project" value="UniProtKB-UniRule"/>
</dbReference>
<dbReference type="GO" id="GO:0052170">
    <property type="term" value="P:symbiont-mediated suppression of host innate immune response"/>
    <property type="evidence" value="ECO:0007669"/>
    <property type="project" value="UniProtKB-KW"/>
</dbReference>
<dbReference type="GO" id="GO:0016032">
    <property type="term" value="P:viral process"/>
    <property type="evidence" value="ECO:0007669"/>
    <property type="project" value="UniProtKB-UniRule"/>
</dbReference>
<dbReference type="CDD" id="cd20757">
    <property type="entry name" value="capping_2-OMTase_Rotavirus"/>
    <property type="match status" value="1"/>
</dbReference>
<dbReference type="HAMAP" id="MF_04124">
    <property type="entry name" value="Rota_VP3"/>
    <property type="match status" value="1"/>
</dbReference>
<dbReference type="HAMAP" id="MF_04128">
    <property type="entry name" value="Rota_VP3_A"/>
    <property type="match status" value="1"/>
</dbReference>
<dbReference type="InterPro" id="IPR011181">
    <property type="entry name" value="VP3_Rotav"/>
</dbReference>
<dbReference type="Pfam" id="PF06929">
    <property type="entry name" value="Rotavirus_VP3"/>
    <property type="match status" value="1"/>
</dbReference>
<dbReference type="PIRSF" id="PIRSF004015">
    <property type="entry name" value="LigT_rotavirus"/>
    <property type="match status" value="1"/>
</dbReference>
<dbReference type="PROSITE" id="PS51589">
    <property type="entry name" value="SAM_MT56_VP3"/>
    <property type="match status" value="1"/>
</dbReference>
<protein>
    <recommendedName>
        <fullName evidence="1">Protein VP3</fullName>
    </recommendedName>
    <domain>
        <recommendedName>
            <fullName evidence="1">2',5'-phosphodiesterase</fullName>
            <ecNumber evidence="1">3.1.4.-</ecNumber>
        </recommendedName>
    </domain>
    <domain>
        <recommendedName>
            <fullName evidence="1">mRNA guanylyltransferase</fullName>
            <ecNumber evidence="1">2.7.7.50</ecNumber>
        </recommendedName>
    </domain>
    <domain>
        <recommendedName>
            <fullName evidence="1">mRNA (guanine-N(7))-methyltransferase</fullName>
            <ecNumber evidence="1">2.1.1.56</ecNumber>
        </recommendedName>
    </domain>
</protein>
<accession>A7J3A0</accession>
<comment type="function">
    <text evidence="1">Multifunctional enzyme involved in mRNA capping. Catalyzes the formation of the 5' cap structure on the viral plus-strand transcripts. Specifically binds to GTP and displays guanylyltransferase and methyltransferase activities. Has affinity for ssRNA but not for dsRNA. Capping activity is non-specific and caps RNAs that initiate with either a G or an A residue. Together with VP1 polymerase, forms a VP1-VP3 complex positioned near the channels situated at each of the five-fold vertices of the core. Following infection, the outermost layer of the virus is lost, leaving a double-layered particle (DLP) made up of the core and VP6 shell. VP1 then catalyzes the transcription of fully conservative plus-strand genomic RNAs that are capped by VP3 and extruded through the DLP's channels into the cytoplasm where they function as mRNAs for translation of viral proteins. DLPs probably have an RNA triphosphatase activity as well, whereas open cores do not.</text>
</comment>
<comment type="function">
    <text evidence="1">Counteracts the host innate immune response thanks to its phosphodiesterase that degrades the 5'-triphosphorylated, 2'-5' linked adenylate oligomers produced by the host cell IFN-inducible 2',5'-oligoadenylate synthetase (OAS). The host RNaseL is therefore not activated.</text>
</comment>
<comment type="catalytic activity">
    <reaction evidence="1">
        <text>a 5'-end diphospho-ribonucleoside in mRNA + GTP + H(+) = a 5'-end (5'-triphosphoguanosine)-ribonucleoside in mRNA + diphosphate</text>
        <dbReference type="Rhea" id="RHEA:67012"/>
        <dbReference type="Rhea" id="RHEA-COMP:17165"/>
        <dbReference type="Rhea" id="RHEA-COMP:17166"/>
        <dbReference type="ChEBI" id="CHEBI:15378"/>
        <dbReference type="ChEBI" id="CHEBI:33019"/>
        <dbReference type="ChEBI" id="CHEBI:37565"/>
        <dbReference type="ChEBI" id="CHEBI:167616"/>
        <dbReference type="ChEBI" id="CHEBI:167617"/>
        <dbReference type="EC" id="2.7.7.50"/>
    </reaction>
</comment>
<comment type="catalytic activity">
    <reaction evidence="1">
        <text>a 5'-end (5'-triphosphoguanosine)-ribonucleoside in mRNA + S-adenosyl-L-methionine = a 5'-end (N(7)-methyl 5'-triphosphoguanosine)-ribonucleoside in mRNA + S-adenosyl-L-homocysteine</text>
        <dbReference type="Rhea" id="RHEA:67008"/>
        <dbReference type="Rhea" id="RHEA-COMP:17166"/>
        <dbReference type="Rhea" id="RHEA-COMP:17167"/>
        <dbReference type="ChEBI" id="CHEBI:57856"/>
        <dbReference type="ChEBI" id="CHEBI:59789"/>
        <dbReference type="ChEBI" id="CHEBI:156461"/>
        <dbReference type="ChEBI" id="CHEBI:167617"/>
        <dbReference type="EC" id="2.1.1.56"/>
    </reaction>
</comment>
<comment type="catalytic activity">
    <reaction evidence="1">
        <text>5'-triphosphoadenylyl-(2'-&gt;5')-adenylyl-(2'-&gt;5')-adenosine + 2 H2O = 2 AMP + ATP + 2 H(+)</text>
        <dbReference type="Rhea" id="RHEA:45964"/>
        <dbReference type="ChEBI" id="CHEBI:15377"/>
        <dbReference type="ChEBI" id="CHEBI:15378"/>
        <dbReference type="ChEBI" id="CHEBI:30616"/>
        <dbReference type="ChEBI" id="CHEBI:67143"/>
        <dbReference type="ChEBI" id="CHEBI:456215"/>
    </reaction>
</comment>
<comment type="subunit">
    <text evidence="1">Interacts with VP1. Interacts with VP2.</text>
</comment>
<comment type="subcellular location">
    <subcellularLocation>
        <location evidence="1">Virion</location>
    </subcellularLocation>
    <text evidence="1">Attached inside the inner capsid as a minor component. There are about 11 to 12 copies per virion.</text>
</comment>
<comment type="domain">
    <text evidence="1">Contains a bipartite N7-methyltransferase domain, a 2'-O-methyltransferase domain and a GTase/RTPase domain. The C-terminus contains a phosphodiesterase domain that degrades the 5'-triphosphorylated, 2'-5' linked adenylate oligomers produced by the host cell in response to IFN stimulation.</text>
</comment>
<comment type="similarity">
    <text evidence="1">Belongs to the rotavirus VP3 family.</text>
</comment>
<reference key="1">
    <citation type="journal article" date="2008" name="J. Virol.">
        <title>Full genome-based classification of rotaviruses reveals a common origin between human Wa-Like and porcine rotavirus strains and human DS-1-like and bovine rotavirus strains.</title>
        <authorList>
            <person name="Matthijnssens J."/>
            <person name="Ciarlet M."/>
            <person name="Heiman E.M."/>
            <person name="Arijs I."/>
            <person name="Delbeke T."/>
            <person name="McDonald S.M."/>
            <person name="Palombo E.A."/>
            <person name="Iturriza-Gomara M."/>
            <person name="Maes P."/>
            <person name="Patton J.T."/>
            <person name="Rahman M."/>
            <person name="Van Ranst M."/>
        </authorList>
    </citation>
    <scope>NUCLEOTIDE SEQUENCE [GENOMIC RNA]</scope>
</reference>
<sequence>MKVLALRHSVAQVYADTQIYTHDETKDDYENAFLISNLTTHNILYLNYSVKTLQILNKSGIAAVEIQKMDELFTLIRCNFTYDYIDDIVYLHDYSYYTNNEIRTDQHWVTKTNIEDYLLPGWKLMYVGYNGNDTRGHYNFSFKCQNAATDDDAIIEYIYSNELDFQNFILKKIKERMTTSLPIARLSNRVFRDKLFKTLVSDHSRVVNVGPRNESMFTFLDHPSIKQFSNGPYLVKDTIKLKQERWLGKRLSQFDIGQYKNMLNVLTTLYQYYDMYHEKPIIYMVGSAPSYWIHDVKQYSDLKFETWDPLDTPYSDLHHKELFYASDVTKLKDNSILYVDIRTDRENADWKTWRKIVEEQTANNLNIAYKYLSTGKAKVCCVKMTAMDLELPISAKLLHHPTTEIRSEFYLIMDIWDSKNTKRFIPKGVLYSYINNTITENVFIQQPFKLRTLRNEYVVALYALSNDFNNREDVVKLVNNQKNALITVRINNTFKDEPKVGFKDIYDWTFLPTDFETNESIITSYDGCLGMFGLSISLASKPTGNNHLFILSGTNKYFKLDQFANHMSISRRSHQIRFSESATSYSGYIFRDLSNNNFNLIGTNVENSVSGHVYNALIYYRYNYSFDLKRWIYLHSTNKASIEGGRYYEHAPIELIYACRSAREFAKLQDDLTVLRYSNEIENYINKVYSITYADDPNYFIGIKFKNIPYEYDVKVPHLTFGVLNISDSMVPDVVAILKKFKNELFRMDVTTSYTYMLSDEIYVANVSGVLSTYFKLYNAFYKEQITFGQSRMFIPHITLSFSNKRVVRIGSTRLNIDFIYLRKIKGDTVFDMTE</sequence>